<organism>
    <name type="scientific">Lactiplantibacillus plantarum (strain JDM1)</name>
    <name type="common">Lactobacillus plantarum</name>
    <dbReference type="NCBI Taxonomy" id="644042"/>
    <lineage>
        <taxon>Bacteria</taxon>
        <taxon>Bacillati</taxon>
        <taxon>Bacillota</taxon>
        <taxon>Bacilli</taxon>
        <taxon>Lactobacillales</taxon>
        <taxon>Lactobacillaceae</taxon>
        <taxon>Lactiplantibacillus</taxon>
    </lineage>
</organism>
<feature type="chain" id="PRO_0000388896" description="UPF0756 membrane protein JDM1_1594">
    <location>
        <begin position="1"/>
        <end position="152"/>
    </location>
</feature>
<feature type="transmembrane region" description="Helical" evidence="1">
    <location>
        <begin position="25"/>
        <end position="45"/>
    </location>
</feature>
<feature type="transmembrane region" description="Helical" evidence="1">
    <location>
        <begin position="52"/>
        <end position="72"/>
    </location>
</feature>
<feature type="transmembrane region" description="Helical" evidence="1">
    <location>
        <begin position="85"/>
        <end position="105"/>
    </location>
</feature>
<feature type="transmembrane region" description="Helical" evidence="1">
    <location>
        <begin position="115"/>
        <end position="135"/>
    </location>
</feature>
<reference key="1">
    <citation type="journal article" date="2009" name="J. Bacteriol.">
        <title>Complete genome sequence of Lactobacillus plantarum JDM1.</title>
        <authorList>
            <person name="Zhang Z.-Y."/>
            <person name="Liu C."/>
            <person name="Zhu Y.-Z."/>
            <person name="Zhong Y."/>
            <person name="Zhu Y.-Q."/>
            <person name="Zheng H.-J."/>
            <person name="Zhao G.-P."/>
            <person name="Wang S.-Y."/>
            <person name="Guo X.-K."/>
        </authorList>
    </citation>
    <scope>NUCLEOTIDE SEQUENCE [LARGE SCALE GENOMIC DNA]</scope>
    <source>
        <strain>JDM1</strain>
    </source>
</reference>
<proteinExistence type="inferred from homology"/>
<evidence type="ECO:0000255" key="1">
    <source>
        <dbReference type="HAMAP-Rule" id="MF_01874"/>
    </source>
</evidence>
<protein>
    <recommendedName>
        <fullName evidence="1">UPF0756 membrane protein JDM1_1594</fullName>
    </recommendedName>
</protein>
<keyword id="KW-1003">Cell membrane</keyword>
<keyword id="KW-0472">Membrane</keyword>
<keyword id="KW-0812">Transmembrane</keyword>
<keyword id="KW-1133">Transmembrane helix</keyword>
<name>Y1594_LACPJ</name>
<gene>
    <name type="ordered locus">JDM1_1594</name>
</gene>
<dbReference type="EMBL" id="CP001617">
    <property type="protein sequence ID" value="ACT62481.1"/>
    <property type="molecule type" value="Genomic_DNA"/>
</dbReference>
<dbReference type="RefSeq" id="WP_003640601.1">
    <property type="nucleotide sequence ID" value="NC_012984.1"/>
</dbReference>
<dbReference type="KEGG" id="lpj:JDM1_1594"/>
<dbReference type="HOGENOM" id="CLU_125889_1_0_9"/>
<dbReference type="GO" id="GO:0005886">
    <property type="term" value="C:plasma membrane"/>
    <property type="evidence" value="ECO:0007669"/>
    <property type="project" value="UniProtKB-SubCell"/>
</dbReference>
<dbReference type="HAMAP" id="MF_01874">
    <property type="entry name" value="UPF0756"/>
    <property type="match status" value="1"/>
</dbReference>
<dbReference type="InterPro" id="IPR007382">
    <property type="entry name" value="UPF0756_TM"/>
</dbReference>
<dbReference type="PANTHER" id="PTHR38452">
    <property type="entry name" value="UPF0756 MEMBRANE PROTEIN YEAL"/>
    <property type="match status" value="1"/>
</dbReference>
<dbReference type="PANTHER" id="PTHR38452:SF1">
    <property type="entry name" value="UPF0756 MEMBRANE PROTEIN YEAL"/>
    <property type="match status" value="1"/>
</dbReference>
<dbReference type="Pfam" id="PF04284">
    <property type="entry name" value="DUF441"/>
    <property type="match status" value="1"/>
</dbReference>
<sequence>MESWLFLLAILVVAWLGKNQSLQIATVVVLLIKLIPNTSKLLTTIGQKGINWGVTVITVAILIPIATGQIGFRDLWHAFKSPVGWIAVACGVLVSVLSFHGVGLLSATPEITVALVFGTIMGVVLLKGIAAGPIIAAGITYCIIQVLHLSLQ</sequence>
<comment type="subcellular location">
    <subcellularLocation>
        <location evidence="1">Cell membrane</location>
        <topology evidence="1">Multi-pass membrane protein</topology>
    </subcellularLocation>
</comment>
<comment type="similarity">
    <text evidence="1">Belongs to the UPF0756 family.</text>
</comment>
<accession>C6VQL6</accession>